<protein>
    <recommendedName>
        <fullName evidence="1">Phosphatidylglycerol--prolipoprotein diacylglyceryl transferase</fullName>
        <ecNumber evidence="1">2.5.1.145</ecNumber>
    </recommendedName>
</protein>
<comment type="function">
    <text evidence="1">Catalyzes the transfer of the diacylglyceryl group from phosphatidylglycerol to the sulfhydryl group of the N-terminal cysteine of a prolipoprotein, the first step in the formation of mature lipoproteins.</text>
</comment>
<comment type="catalytic activity">
    <reaction evidence="1">
        <text>L-cysteinyl-[prolipoprotein] + a 1,2-diacyl-sn-glycero-3-phospho-(1'-sn-glycerol) = an S-1,2-diacyl-sn-glyceryl-L-cysteinyl-[prolipoprotein] + sn-glycerol 1-phosphate + H(+)</text>
        <dbReference type="Rhea" id="RHEA:56712"/>
        <dbReference type="Rhea" id="RHEA-COMP:14679"/>
        <dbReference type="Rhea" id="RHEA-COMP:14680"/>
        <dbReference type="ChEBI" id="CHEBI:15378"/>
        <dbReference type="ChEBI" id="CHEBI:29950"/>
        <dbReference type="ChEBI" id="CHEBI:57685"/>
        <dbReference type="ChEBI" id="CHEBI:64716"/>
        <dbReference type="ChEBI" id="CHEBI:140658"/>
        <dbReference type="EC" id="2.5.1.145"/>
    </reaction>
</comment>
<comment type="pathway">
    <text evidence="1">Protein modification; lipoprotein biosynthesis (diacylglyceryl transfer).</text>
</comment>
<comment type="subcellular location">
    <subcellularLocation>
        <location evidence="1">Cell membrane</location>
        <topology evidence="1">Multi-pass membrane protein</topology>
    </subcellularLocation>
</comment>
<comment type="similarity">
    <text evidence="1">Belongs to the Lgt family.</text>
</comment>
<organism>
    <name type="scientific">Streptococcus pyogenes serotype M18 (strain MGAS8232)</name>
    <dbReference type="NCBI Taxonomy" id="186103"/>
    <lineage>
        <taxon>Bacteria</taxon>
        <taxon>Bacillati</taxon>
        <taxon>Bacillota</taxon>
        <taxon>Bacilli</taxon>
        <taxon>Lactobacillales</taxon>
        <taxon>Streptococcaceae</taxon>
        <taxon>Streptococcus</taxon>
    </lineage>
</organism>
<evidence type="ECO:0000255" key="1">
    <source>
        <dbReference type="HAMAP-Rule" id="MF_01147"/>
    </source>
</evidence>
<gene>
    <name evidence="1" type="primary">lgt</name>
    <name type="ordered locus">spyM18_0654</name>
</gene>
<feature type="chain" id="PRO_0000172693" description="Phosphatidylglycerol--prolipoprotein diacylglyceryl transferase">
    <location>
        <begin position="1"/>
        <end position="259"/>
    </location>
</feature>
<feature type="transmembrane region" description="Helical" evidence="1">
    <location>
        <begin position="12"/>
        <end position="32"/>
    </location>
</feature>
<feature type="transmembrane region" description="Helical" evidence="1">
    <location>
        <begin position="41"/>
        <end position="61"/>
    </location>
</feature>
<feature type="transmembrane region" description="Helical" evidence="1">
    <location>
        <begin position="80"/>
        <end position="100"/>
    </location>
</feature>
<feature type="transmembrane region" description="Helical" evidence="1">
    <location>
        <begin position="109"/>
        <end position="129"/>
    </location>
</feature>
<feature type="transmembrane region" description="Helical" evidence="1">
    <location>
        <begin position="167"/>
        <end position="187"/>
    </location>
</feature>
<feature type="transmembrane region" description="Helical" evidence="1">
    <location>
        <begin position="194"/>
        <end position="214"/>
    </location>
</feature>
<feature type="transmembrane region" description="Helical" evidence="1">
    <location>
        <begin position="226"/>
        <end position="246"/>
    </location>
</feature>
<feature type="binding site" evidence="1">
    <location>
        <position position="131"/>
    </location>
    <ligand>
        <name>a 1,2-diacyl-sn-glycero-3-phospho-(1'-sn-glycerol)</name>
        <dbReference type="ChEBI" id="CHEBI:64716"/>
    </ligand>
</feature>
<proteinExistence type="inferred from homology"/>
<name>LGT_STRP8</name>
<accession>P60964</accession>
<accession>Q9A0W4</accession>
<dbReference type="EC" id="2.5.1.145" evidence="1"/>
<dbReference type="EMBL" id="AE009949">
    <property type="protein sequence ID" value="AAL97334.1"/>
    <property type="molecule type" value="Genomic_DNA"/>
</dbReference>
<dbReference type="RefSeq" id="WP_002990577.1">
    <property type="nucleotide sequence ID" value="NC_003485.1"/>
</dbReference>
<dbReference type="SMR" id="P60964"/>
<dbReference type="GeneID" id="69901201"/>
<dbReference type="KEGG" id="spm:spyM18_0654"/>
<dbReference type="HOGENOM" id="CLU_013386_0_1_9"/>
<dbReference type="UniPathway" id="UPA00664"/>
<dbReference type="GO" id="GO:0005886">
    <property type="term" value="C:plasma membrane"/>
    <property type="evidence" value="ECO:0007669"/>
    <property type="project" value="UniProtKB-SubCell"/>
</dbReference>
<dbReference type="GO" id="GO:0008961">
    <property type="term" value="F:phosphatidylglycerol-prolipoprotein diacylglyceryl transferase activity"/>
    <property type="evidence" value="ECO:0007669"/>
    <property type="project" value="UniProtKB-UniRule"/>
</dbReference>
<dbReference type="GO" id="GO:0042158">
    <property type="term" value="P:lipoprotein biosynthetic process"/>
    <property type="evidence" value="ECO:0007669"/>
    <property type="project" value="UniProtKB-UniRule"/>
</dbReference>
<dbReference type="HAMAP" id="MF_01147">
    <property type="entry name" value="Lgt"/>
    <property type="match status" value="1"/>
</dbReference>
<dbReference type="InterPro" id="IPR001640">
    <property type="entry name" value="Lgt"/>
</dbReference>
<dbReference type="NCBIfam" id="TIGR00544">
    <property type="entry name" value="lgt"/>
    <property type="match status" value="1"/>
</dbReference>
<dbReference type="PANTHER" id="PTHR30589:SF0">
    <property type="entry name" value="PHOSPHATIDYLGLYCEROL--PROLIPOPROTEIN DIACYLGLYCERYL TRANSFERASE"/>
    <property type="match status" value="1"/>
</dbReference>
<dbReference type="PANTHER" id="PTHR30589">
    <property type="entry name" value="PROLIPOPROTEIN DIACYLGLYCERYL TRANSFERASE"/>
    <property type="match status" value="1"/>
</dbReference>
<dbReference type="Pfam" id="PF01790">
    <property type="entry name" value="LGT"/>
    <property type="match status" value="1"/>
</dbReference>
<dbReference type="PROSITE" id="PS01311">
    <property type="entry name" value="LGT"/>
    <property type="match status" value="1"/>
</dbReference>
<reference key="1">
    <citation type="journal article" date="2002" name="Proc. Natl. Acad. Sci. U.S.A.">
        <title>Genome sequence and comparative microarray analysis of serotype M18 group A Streptococcus strains associated with acute rheumatic fever outbreaks.</title>
        <authorList>
            <person name="Smoot J.C."/>
            <person name="Barbian K.D."/>
            <person name="Van Gompel J.J."/>
            <person name="Smoot L.M."/>
            <person name="Chaussee M.S."/>
            <person name="Sylva G.L."/>
            <person name="Sturdevant D.E."/>
            <person name="Ricklefs S.M."/>
            <person name="Porcella S.F."/>
            <person name="Parkins L.D."/>
            <person name="Beres S.B."/>
            <person name="Campbell D.S."/>
            <person name="Smith T.M."/>
            <person name="Zhang Q."/>
            <person name="Kapur V."/>
            <person name="Daly J.A."/>
            <person name="Veasy L.G."/>
            <person name="Musser J.M."/>
        </authorList>
    </citation>
    <scope>NUCLEOTIDE SEQUENCE [LARGE SCALE GENOMIC DNA]</scope>
    <source>
        <strain>MGAS8232</strain>
    </source>
</reference>
<sequence>MINPIALKCGPLAIHWYALCILSGLVLAVYLASKEAPKKGISSDAIFDFILIAFPLAIVGARIYYVIFEWSYYVKHLDEIIAIWNGGIAIYGGLITGALVLLAYCYNKVLNPIHFLDIAAPSVMVAQAIGRWGNFINQEAYGKAVSQLNYLPSFIQKQMFIEGSYRIPTFLYESLWNLLGFVIIMMWRRKPKSLLDGEIFAFYLIWYGSGRLVIEGMRTDSLMFLGIRISQYVSALLIIIGLIFVIKRRRQKGISYYQE</sequence>
<keyword id="KW-1003">Cell membrane</keyword>
<keyword id="KW-0472">Membrane</keyword>
<keyword id="KW-0808">Transferase</keyword>
<keyword id="KW-0812">Transmembrane</keyword>
<keyword id="KW-1133">Transmembrane helix</keyword>